<accession>A6MMX6</accession>
<keyword id="KW-0150">Chloroplast</keyword>
<keyword id="KW-0240">DNA-directed RNA polymerase</keyword>
<keyword id="KW-0548">Nucleotidyltransferase</keyword>
<keyword id="KW-0934">Plastid</keyword>
<keyword id="KW-0804">Transcription</keyword>
<keyword id="KW-0808">Transferase</keyword>
<reference key="1">
    <citation type="journal article" date="2007" name="Mol. Phylogenet. Evol.">
        <title>Phylogenetic and evolutionary implications of complete chloroplast genome sequences of four early-diverging angiosperms: Buxus (Buxaceae), Chloranthus (Chloranthaceae), Dioscorea (Dioscoreaceae), and Illicium (Schisandraceae).</title>
        <authorList>
            <person name="Hansen D.R."/>
            <person name="Dastidar S.G."/>
            <person name="Cai Z."/>
            <person name="Penaflor C."/>
            <person name="Kuehl J.V."/>
            <person name="Boore J.L."/>
            <person name="Jansen R.K."/>
        </authorList>
    </citation>
    <scope>NUCLEOTIDE SEQUENCE [LARGE SCALE GENOMIC DNA]</scope>
</reference>
<evidence type="ECO:0000255" key="1">
    <source>
        <dbReference type="HAMAP-Rule" id="MF_00059"/>
    </source>
</evidence>
<geneLocation type="chloroplast"/>
<gene>
    <name evidence="1" type="primary">rpoA</name>
</gene>
<comment type="function">
    <text evidence="1">DNA-dependent RNA polymerase catalyzes the transcription of DNA into RNA using the four ribonucleoside triphosphates as substrates.</text>
</comment>
<comment type="catalytic activity">
    <reaction evidence="1">
        <text>RNA(n) + a ribonucleoside 5'-triphosphate = RNA(n+1) + diphosphate</text>
        <dbReference type="Rhea" id="RHEA:21248"/>
        <dbReference type="Rhea" id="RHEA-COMP:14527"/>
        <dbReference type="Rhea" id="RHEA-COMP:17342"/>
        <dbReference type="ChEBI" id="CHEBI:33019"/>
        <dbReference type="ChEBI" id="CHEBI:61557"/>
        <dbReference type="ChEBI" id="CHEBI:140395"/>
        <dbReference type="EC" id="2.7.7.6"/>
    </reaction>
</comment>
<comment type="subunit">
    <text evidence="1">In plastids the minimal PEP RNA polymerase catalytic core is composed of four subunits: alpha, beta, beta', and beta''. When a (nuclear-encoded) sigma factor is associated with the core the holoenzyme is formed, which can initiate transcription.</text>
</comment>
<comment type="subcellular location">
    <subcellularLocation>
        <location>Plastid</location>
        <location>Chloroplast</location>
    </subcellularLocation>
</comment>
<comment type="domain">
    <text evidence="1">The N-terminal domain is essential for RNAP assembly and basal transcription, whereas the C-terminal domain is involved in interaction with transcriptional regulators and with upstream promoter elements.</text>
</comment>
<comment type="similarity">
    <text evidence="1">Belongs to the RNA polymerase alpha chain family.</text>
</comment>
<dbReference type="EC" id="2.7.7.6" evidence="1"/>
<dbReference type="EMBL" id="EF380354">
    <property type="protein sequence ID" value="ABQ52550.1"/>
    <property type="molecule type" value="Genomic_DNA"/>
</dbReference>
<dbReference type="RefSeq" id="YP_001294302.1">
    <property type="nucleotide sequence ID" value="NC_009600.1"/>
</dbReference>
<dbReference type="SMR" id="A6MMX6"/>
<dbReference type="GeneID" id="5236761"/>
<dbReference type="GO" id="GO:0009507">
    <property type="term" value="C:chloroplast"/>
    <property type="evidence" value="ECO:0007669"/>
    <property type="project" value="UniProtKB-SubCell"/>
</dbReference>
<dbReference type="GO" id="GO:0000428">
    <property type="term" value="C:DNA-directed RNA polymerase complex"/>
    <property type="evidence" value="ECO:0007669"/>
    <property type="project" value="UniProtKB-KW"/>
</dbReference>
<dbReference type="GO" id="GO:0005739">
    <property type="term" value="C:mitochondrion"/>
    <property type="evidence" value="ECO:0007669"/>
    <property type="project" value="GOC"/>
</dbReference>
<dbReference type="GO" id="GO:0003677">
    <property type="term" value="F:DNA binding"/>
    <property type="evidence" value="ECO:0007669"/>
    <property type="project" value="UniProtKB-UniRule"/>
</dbReference>
<dbReference type="GO" id="GO:0003899">
    <property type="term" value="F:DNA-directed RNA polymerase activity"/>
    <property type="evidence" value="ECO:0007669"/>
    <property type="project" value="UniProtKB-UniRule"/>
</dbReference>
<dbReference type="GO" id="GO:0046983">
    <property type="term" value="F:protein dimerization activity"/>
    <property type="evidence" value="ECO:0007669"/>
    <property type="project" value="InterPro"/>
</dbReference>
<dbReference type="GO" id="GO:0006351">
    <property type="term" value="P:DNA-templated transcription"/>
    <property type="evidence" value="ECO:0007669"/>
    <property type="project" value="UniProtKB-UniRule"/>
</dbReference>
<dbReference type="CDD" id="cd06928">
    <property type="entry name" value="RNAP_alpha_NTD"/>
    <property type="match status" value="1"/>
</dbReference>
<dbReference type="FunFam" id="2.170.120.12:FF:000001">
    <property type="entry name" value="DNA-directed RNA polymerase subunit alpha"/>
    <property type="match status" value="1"/>
</dbReference>
<dbReference type="FunFam" id="3.30.1360.10:FF:000039">
    <property type="entry name" value="DNA-directed RNA polymerase subunit alpha"/>
    <property type="match status" value="1"/>
</dbReference>
<dbReference type="Gene3D" id="1.10.150.20">
    <property type="entry name" value="5' to 3' exonuclease, C-terminal subdomain"/>
    <property type="match status" value="1"/>
</dbReference>
<dbReference type="Gene3D" id="2.170.120.12">
    <property type="entry name" value="DNA-directed RNA polymerase, insert domain"/>
    <property type="match status" value="1"/>
</dbReference>
<dbReference type="Gene3D" id="3.30.1360.10">
    <property type="entry name" value="RNA polymerase, RBP11-like subunit"/>
    <property type="match status" value="1"/>
</dbReference>
<dbReference type="HAMAP" id="MF_00059">
    <property type="entry name" value="RNApol_bact_RpoA"/>
    <property type="match status" value="1"/>
</dbReference>
<dbReference type="InterPro" id="IPR011262">
    <property type="entry name" value="DNA-dir_RNA_pol_insert"/>
</dbReference>
<dbReference type="InterPro" id="IPR011263">
    <property type="entry name" value="DNA-dir_RNA_pol_RpoA/D/Rpb3"/>
</dbReference>
<dbReference type="InterPro" id="IPR011773">
    <property type="entry name" value="DNA-dir_RpoA"/>
</dbReference>
<dbReference type="InterPro" id="IPR036603">
    <property type="entry name" value="RBP11-like"/>
</dbReference>
<dbReference type="InterPro" id="IPR011260">
    <property type="entry name" value="RNAP_asu_C"/>
</dbReference>
<dbReference type="InterPro" id="IPR036643">
    <property type="entry name" value="RNApol_insert_sf"/>
</dbReference>
<dbReference type="NCBIfam" id="TIGR02027">
    <property type="entry name" value="rpoA"/>
    <property type="match status" value="1"/>
</dbReference>
<dbReference type="Pfam" id="PF01000">
    <property type="entry name" value="RNA_pol_A_bac"/>
    <property type="match status" value="1"/>
</dbReference>
<dbReference type="Pfam" id="PF03118">
    <property type="entry name" value="RNA_pol_A_CTD"/>
    <property type="match status" value="1"/>
</dbReference>
<dbReference type="Pfam" id="PF01193">
    <property type="entry name" value="RNA_pol_L"/>
    <property type="match status" value="1"/>
</dbReference>
<dbReference type="SMART" id="SM00662">
    <property type="entry name" value="RPOLD"/>
    <property type="match status" value="1"/>
</dbReference>
<dbReference type="SUPFAM" id="SSF47789">
    <property type="entry name" value="C-terminal domain of RNA polymerase alpha subunit"/>
    <property type="match status" value="1"/>
</dbReference>
<dbReference type="SUPFAM" id="SSF56553">
    <property type="entry name" value="Insert subdomain of RNA polymerase alpha subunit"/>
    <property type="match status" value="1"/>
</dbReference>
<dbReference type="SUPFAM" id="SSF55257">
    <property type="entry name" value="RBP11-like subunits of RNA polymerase"/>
    <property type="match status" value="1"/>
</dbReference>
<sequence length="331" mass="37827">MVREEIAVSTRTLQWKCVESRADSKRLYYGRFVLSPLMKGQADTIGIAMRRALLGEIEGTCITRAKSEKVPHEYSTIVGIEESVHEILMNLKEIVFRSHLYGTRGASICVRGPRYVTAQDIISPPSVKIVDTTQYIASLTEPIDLCIELQIERDRGYRIKTPNNYQDGSYPIDAVSMPVRNANHSIHSYGNGNEKQEILFLEIWTNGSFTPKEALYEASRNLIDLFLPFLHAEEQDINVEDNQNRATAPLFTFHDGLTNIGKRKKGIALKRVFIDQSELPTRTYNCLKRSNIHTLLDLLSNSQEDLMRIEHFRIEDVKQILGILQKRFAID</sequence>
<name>RPOA_ILLOL</name>
<proteinExistence type="inferred from homology"/>
<feature type="chain" id="PRO_0000323670" description="DNA-directed RNA polymerase subunit alpha">
    <location>
        <begin position="1"/>
        <end position="331"/>
    </location>
</feature>
<feature type="region of interest" description="Alpha N-terminal domain (alpha-NTD)" evidence="1">
    <location>
        <begin position="1"/>
        <end position="233"/>
    </location>
</feature>
<feature type="region of interest" description="Alpha C-terminal domain (alpha-CTD)" evidence="1">
    <location>
        <begin position="268"/>
        <end position="331"/>
    </location>
</feature>
<protein>
    <recommendedName>
        <fullName evidence="1">DNA-directed RNA polymerase subunit alpha</fullName>
        <shortName evidence="1">PEP</shortName>
        <ecNumber evidence="1">2.7.7.6</ecNumber>
    </recommendedName>
    <alternativeName>
        <fullName evidence="1">Plastid-encoded RNA polymerase subunit alpha</fullName>
        <shortName evidence="1">RNA polymerase subunit alpha</shortName>
    </alternativeName>
</protein>
<organism>
    <name type="scientific">Illicium oligandrum</name>
    <name type="common">Star anise</name>
    <dbReference type="NCBI Taxonomy" id="145286"/>
    <lineage>
        <taxon>Eukaryota</taxon>
        <taxon>Viridiplantae</taxon>
        <taxon>Streptophyta</taxon>
        <taxon>Embryophyta</taxon>
        <taxon>Tracheophyta</taxon>
        <taxon>Spermatophyta</taxon>
        <taxon>Magnoliopsida</taxon>
        <taxon>Austrobaileyales</taxon>
        <taxon>Schisandraceae</taxon>
        <taxon>Illicium</taxon>
    </lineage>
</organism>